<dbReference type="EMBL" id="EU233899">
    <property type="protein sequence ID" value="ABY71718.1"/>
    <property type="molecule type" value="mRNA"/>
</dbReference>
<dbReference type="SMR" id="B1P1G8"/>
<dbReference type="ArachnoServer" id="AS000847">
    <property type="toxin name" value="U22-theraphotoxin-Cg1a"/>
</dbReference>
<dbReference type="GO" id="GO:0005576">
    <property type="term" value="C:extracellular region"/>
    <property type="evidence" value="ECO:0007669"/>
    <property type="project" value="UniProtKB-SubCell"/>
</dbReference>
<dbReference type="GO" id="GO:0008200">
    <property type="term" value="F:ion channel inhibitor activity"/>
    <property type="evidence" value="ECO:0007669"/>
    <property type="project" value="InterPro"/>
</dbReference>
<dbReference type="GO" id="GO:0090729">
    <property type="term" value="F:toxin activity"/>
    <property type="evidence" value="ECO:0007669"/>
    <property type="project" value="UniProtKB-KW"/>
</dbReference>
<dbReference type="InterPro" id="IPR011696">
    <property type="entry name" value="Huwentoxin-1"/>
</dbReference>
<dbReference type="Pfam" id="PF07740">
    <property type="entry name" value="Toxin_12"/>
    <property type="match status" value="1"/>
</dbReference>
<dbReference type="SUPFAM" id="SSF57059">
    <property type="entry name" value="omega toxin-like"/>
    <property type="match status" value="1"/>
</dbReference>
<sequence>MKVSVVLAITVLALLSVAYASEFEEKELVKEVVRTIFLGKEDAALREETDRECKWYLGDCKAHEDCCEHLRCHSRWDWCIWDGTFG</sequence>
<proteinExistence type="evidence at protein level"/>
<feature type="signal peptide" evidence="2">
    <location>
        <begin position="1"/>
        <end position="20"/>
    </location>
</feature>
<feature type="propeptide" id="PRO_0000398498" evidence="3">
    <location>
        <begin position="21"/>
        <end position="51"/>
    </location>
</feature>
<feature type="peptide" id="PRO_0000398499" description="U22-theraphotoxin-Cg1a">
    <location>
        <begin position="52"/>
        <end position="85"/>
    </location>
</feature>
<feature type="modified residue" description="Phenylalanine amide" evidence="3">
    <location>
        <position position="85"/>
    </location>
</feature>
<feature type="disulfide bond" evidence="1">
    <location>
        <begin position="53"/>
        <end position="67"/>
    </location>
</feature>
<feature type="disulfide bond" evidence="1">
    <location>
        <begin position="60"/>
        <end position="72"/>
    </location>
</feature>
<feature type="disulfide bond" evidence="1">
    <location>
        <begin position="66"/>
        <end position="79"/>
    </location>
</feature>
<name>JZT44_CHIGU</name>
<accession>B1P1G8</accession>
<reference key="1">
    <citation type="journal article" date="2008" name="Cell. Mol. Life Sci.">
        <title>Molecular diversity and evolution of cystine knot toxins of the tarantula Chilobrachys jingzhao.</title>
        <authorList>
            <person name="Chen J."/>
            <person name="Deng M."/>
            <person name="He Q."/>
            <person name="Meng E."/>
            <person name="Jiang L."/>
            <person name="Liao Z."/>
            <person name="Rong M."/>
            <person name="Liang S."/>
        </authorList>
    </citation>
    <scope>NUCLEOTIDE SEQUENCE [LARGE SCALE MRNA]</scope>
    <source>
        <tissue>Venom gland</tissue>
    </source>
</reference>
<reference key="2">
    <citation type="journal article" date="2007" name="Proteomics">
        <title>Proteomic and peptidomic analysis of the venom from Chinese tarantula Chilobrachys jingzhao.</title>
        <authorList>
            <person name="Liao Z."/>
            <person name="Cao J."/>
            <person name="Li S."/>
            <person name="Yan X."/>
            <person name="Hu W."/>
            <person name="He Q."/>
            <person name="Chen J."/>
            <person name="Tang J."/>
            <person name="Xie J."/>
            <person name="Liang S."/>
        </authorList>
    </citation>
    <scope>PROTEIN SEQUENCE OF 52-85</scope>
    <scope>MASS SPECTROMETRY</scope>
    <scope>AMIDATION AT PHE-85</scope>
    <source>
        <tissue>Venom</tissue>
    </source>
</reference>
<comment type="function">
    <text>Probable ion channel inhibitor.</text>
</comment>
<comment type="subcellular location">
    <subcellularLocation>
        <location>Secreted</location>
    </subcellularLocation>
</comment>
<comment type="tissue specificity">
    <text>Expressed by the venom gland.</text>
</comment>
<comment type="domain">
    <text evidence="1">The presence of a 'disulfide through disulfide knot' structurally defines this protein as a knottin.</text>
</comment>
<comment type="mass spectrometry">
    <text>Monoisotopic mass.</text>
</comment>
<comment type="similarity">
    <text evidence="4">Belongs to the neurotoxin 10 (Hwtx-1) family. 42 (Jztx-44) subfamily.</text>
</comment>
<organism>
    <name type="scientific">Chilobrachys guangxiensis</name>
    <name type="common">Chinese earth tiger tarantula</name>
    <name type="synonym">Chilobrachys jingzhao</name>
    <dbReference type="NCBI Taxonomy" id="278060"/>
    <lineage>
        <taxon>Eukaryota</taxon>
        <taxon>Metazoa</taxon>
        <taxon>Ecdysozoa</taxon>
        <taxon>Arthropoda</taxon>
        <taxon>Chelicerata</taxon>
        <taxon>Arachnida</taxon>
        <taxon>Araneae</taxon>
        <taxon>Mygalomorphae</taxon>
        <taxon>Theraphosidae</taxon>
        <taxon>Chilobrachys</taxon>
    </lineage>
</organism>
<evidence type="ECO:0000250" key="1"/>
<evidence type="ECO:0000255" key="2"/>
<evidence type="ECO:0000269" key="3">
    <source>
    </source>
</evidence>
<evidence type="ECO:0000305" key="4"/>
<keyword id="KW-0027">Amidation</keyword>
<keyword id="KW-0903">Direct protein sequencing</keyword>
<keyword id="KW-1015">Disulfide bond</keyword>
<keyword id="KW-0872">Ion channel impairing toxin</keyword>
<keyword id="KW-0960">Knottin</keyword>
<keyword id="KW-0964">Secreted</keyword>
<keyword id="KW-0732">Signal</keyword>
<keyword id="KW-0800">Toxin</keyword>
<protein>
    <recommendedName>
        <fullName>U22-theraphotoxin-Cg1a</fullName>
        <shortName>U22-TRTX-Cg1a</shortName>
    </recommendedName>
    <alternativeName>
        <fullName>Jingzhaotoxin-44</fullName>
        <shortName>JZTX-44</shortName>
    </alternativeName>
    <alternativeName>
        <fullName>Peptide F6-26.48</fullName>
    </alternativeName>
</protein>